<keyword id="KW-0002">3D-structure</keyword>
<keyword id="KW-1064">Adaptive immunity</keyword>
<keyword id="KW-0067">ATP-binding</keyword>
<keyword id="KW-0106">Calcium</keyword>
<keyword id="KW-0112">Calmodulin-binding</keyword>
<keyword id="KW-0963">Cytoplasm</keyword>
<keyword id="KW-0325">Glycoprotein</keyword>
<keyword id="KW-0391">Immunity</keyword>
<keyword id="KW-0395">Inflammatory response</keyword>
<keyword id="KW-0418">Kinase</keyword>
<keyword id="KW-0547">Nucleotide-binding</keyword>
<keyword id="KW-0539">Nucleus</keyword>
<keyword id="KW-0597">Phosphoprotein</keyword>
<keyword id="KW-1267">Proteomics identification</keyword>
<keyword id="KW-1185">Reference proteome</keyword>
<keyword id="KW-0723">Serine/threonine-protein kinase</keyword>
<keyword id="KW-0808">Transferase</keyword>
<gene>
    <name type="primary">CAMK4</name>
    <name type="synonym">CAMK</name>
    <name type="synonym">CAMK-GR</name>
    <name type="synonym">CAMKIV</name>
</gene>
<dbReference type="EC" id="2.7.11.17"/>
<dbReference type="EMBL" id="D30742">
    <property type="protein sequence ID" value="BAA06403.1"/>
    <property type="molecule type" value="mRNA"/>
</dbReference>
<dbReference type="EMBL" id="L17000">
    <property type="protein sequence ID" value="AAA35639.1"/>
    <property type="molecule type" value="mRNA"/>
</dbReference>
<dbReference type="EMBL" id="L24959">
    <property type="protein sequence ID" value="AAA18251.1"/>
    <property type="molecule type" value="mRNA"/>
</dbReference>
<dbReference type="EMBL" id="CH471086">
    <property type="protein sequence ID" value="EAW49033.1"/>
    <property type="molecule type" value="Genomic_DNA"/>
</dbReference>
<dbReference type="EMBL" id="CH471086">
    <property type="protein sequence ID" value="EAW49034.1"/>
    <property type="molecule type" value="Genomic_DNA"/>
</dbReference>
<dbReference type="EMBL" id="BC016695">
    <property type="protein sequence ID" value="AAH16695.2"/>
    <property type="status" value="ALT_INIT"/>
    <property type="molecule type" value="mRNA"/>
</dbReference>
<dbReference type="EMBL" id="BC025687">
    <property type="protein sequence ID" value="AAH25687.1"/>
    <property type="molecule type" value="mRNA"/>
</dbReference>
<dbReference type="CCDS" id="CCDS4103.1"/>
<dbReference type="PIR" id="A53036">
    <property type="entry name" value="A53036"/>
</dbReference>
<dbReference type="RefSeq" id="NP_001310303.1">
    <property type="nucleotide sequence ID" value="NM_001323374.2"/>
</dbReference>
<dbReference type="RefSeq" id="NP_001310304.1">
    <property type="nucleotide sequence ID" value="NM_001323375.2"/>
</dbReference>
<dbReference type="RefSeq" id="NP_001735.1">
    <property type="nucleotide sequence ID" value="NM_001744.6"/>
</dbReference>
<dbReference type="PDB" id="2W4O">
    <property type="method" value="X-ray"/>
    <property type="resolution" value="2.17 A"/>
    <property type="chains" value="A=15-340"/>
</dbReference>
<dbReference type="PDBsum" id="2W4O"/>
<dbReference type="SMR" id="Q16566"/>
<dbReference type="BioGRID" id="107264">
    <property type="interactions" value="53"/>
</dbReference>
<dbReference type="CORUM" id="Q16566"/>
<dbReference type="DIP" id="DIP-41997N"/>
<dbReference type="FunCoup" id="Q16566">
    <property type="interactions" value="1741"/>
</dbReference>
<dbReference type="IntAct" id="Q16566">
    <property type="interactions" value="37"/>
</dbReference>
<dbReference type="STRING" id="9606.ENSP00000282356"/>
<dbReference type="BindingDB" id="Q16566"/>
<dbReference type="ChEMBL" id="CHEMBL2494"/>
<dbReference type="DrugBank" id="DB07676">
    <property type="generic name" value="3-({[(3S)-3,4-dihydroxybutyl]oxy}amino)-1H,2'H-2,3'-biindol-2'-one"/>
</dbReference>
<dbReference type="DrugBank" id="DB07664">
    <property type="generic name" value="K-00546"/>
</dbReference>
<dbReference type="DrugCentral" id="Q16566"/>
<dbReference type="GlyCosmos" id="Q16566">
    <property type="glycosylation" value="7 sites, 1 glycan"/>
</dbReference>
<dbReference type="GlyGen" id="Q16566">
    <property type="glycosylation" value="8 sites, 1 O-linked glycan (7 sites)"/>
</dbReference>
<dbReference type="iPTMnet" id="Q16566"/>
<dbReference type="MetOSite" id="Q16566"/>
<dbReference type="PhosphoSitePlus" id="Q16566"/>
<dbReference type="BioMuta" id="CAMK4"/>
<dbReference type="DMDM" id="2499586"/>
<dbReference type="jPOST" id="Q16566"/>
<dbReference type="MassIVE" id="Q16566"/>
<dbReference type="PaxDb" id="9606-ENSP00000282356"/>
<dbReference type="PeptideAtlas" id="Q16566"/>
<dbReference type="ProteomicsDB" id="60921"/>
<dbReference type="Pumba" id="Q16566"/>
<dbReference type="Antibodypedia" id="2084">
    <property type="antibodies" value="635 antibodies from 42 providers"/>
</dbReference>
<dbReference type="DNASU" id="814"/>
<dbReference type="Ensembl" id="ENST00000282356.9">
    <property type="protein sequence ID" value="ENSP00000282356.4"/>
    <property type="gene ID" value="ENSG00000152495.11"/>
</dbReference>
<dbReference type="Ensembl" id="ENST00000512453.5">
    <property type="protein sequence ID" value="ENSP00000422634.1"/>
    <property type="gene ID" value="ENSG00000152495.11"/>
</dbReference>
<dbReference type="GeneID" id="814"/>
<dbReference type="KEGG" id="hsa:814"/>
<dbReference type="MANE-Select" id="ENST00000282356.9">
    <property type="protein sequence ID" value="ENSP00000282356.4"/>
    <property type="RefSeq nucleotide sequence ID" value="NM_001744.6"/>
    <property type="RefSeq protein sequence ID" value="NP_001735.1"/>
</dbReference>
<dbReference type="UCSC" id="uc003kpf.4">
    <property type="organism name" value="human"/>
</dbReference>
<dbReference type="AGR" id="HGNC:1464"/>
<dbReference type="CTD" id="814"/>
<dbReference type="DisGeNET" id="814"/>
<dbReference type="GeneCards" id="CAMK4"/>
<dbReference type="HGNC" id="HGNC:1464">
    <property type="gene designation" value="CAMK4"/>
</dbReference>
<dbReference type="HPA" id="ENSG00000152495">
    <property type="expression patterns" value="Group enriched (brain, lymphoid tissue)"/>
</dbReference>
<dbReference type="MalaCards" id="CAMK4"/>
<dbReference type="MIM" id="114080">
    <property type="type" value="gene"/>
</dbReference>
<dbReference type="neXtProt" id="NX_Q16566"/>
<dbReference type="OpenTargets" id="ENSG00000152495"/>
<dbReference type="PharmGKB" id="PA26050"/>
<dbReference type="VEuPathDB" id="HostDB:ENSG00000152495"/>
<dbReference type="eggNOG" id="KOG0032">
    <property type="taxonomic scope" value="Eukaryota"/>
</dbReference>
<dbReference type="GeneTree" id="ENSGT00940000160006"/>
<dbReference type="HOGENOM" id="CLU_000288_63_0_1"/>
<dbReference type="InParanoid" id="Q16566"/>
<dbReference type="OMA" id="VVPDYWI"/>
<dbReference type="OrthoDB" id="40902at2759"/>
<dbReference type="PAN-GO" id="Q16566">
    <property type="GO annotations" value="8 GO annotations based on evolutionary models"/>
</dbReference>
<dbReference type="PhylomeDB" id="Q16566"/>
<dbReference type="TreeFam" id="TF351230"/>
<dbReference type="BRENDA" id="2.7.11.17">
    <property type="organism ID" value="2681"/>
</dbReference>
<dbReference type="PathwayCommons" id="Q16566"/>
<dbReference type="Reactome" id="R-HSA-111932">
    <property type="pathway name" value="CaMK IV-mediated phosphorylation of CREB"/>
</dbReference>
<dbReference type="Reactome" id="R-HSA-2151201">
    <property type="pathway name" value="Transcriptional activation of mitochondrial biogenesis"/>
</dbReference>
<dbReference type="Reactome" id="R-HSA-442729">
    <property type="pathway name" value="CREB1 phosphorylation through the activation of CaMKII/CaMKK/CaMKIV cascasde"/>
</dbReference>
<dbReference type="Reactome" id="R-HSA-9022535">
    <property type="pathway name" value="Loss of phosphorylation of MECP2 at T308"/>
</dbReference>
<dbReference type="Reactome" id="R-HSA-9022692">
    <property type="pathway name" value="Regulation of MECP2 expression and activity"/>
</dbReference>
<dbReference type="Reactome" id="R-HSA-9617324">
    <property type="pathway name" value="Negative regulation of NMDA receptor-mediated neuronal transmission"/>
</dbReference>
<dbReference type="SignaLink" id="Q16566"/>
<dbReference type="SIGNOR" id="Q16566"/>
<dbReference type="BioGRID-ORCS" id="814">
    <property type="hits" value="8 hits in 1186 CRISPR screens"/>
</dbReference>
<dbReference type="ChiTaRS" id="CAMK4">
    <property type="organism name" value="human"/>
</dbReference>
<dbReference type="EvolutionaryTrace" id="Q16566"/>
<dbReference type="GeneWiki" id="CAMK4"/>
<dbReference type="GenomeRNAi" id="814"/>
<dbReference type="Pharos" id="Q16566">
    <property type="development level" value="Tbio"/>
</dbReference>
<dbReference type="PRO" id="PR:Q16566"/>
<dbReference type="Proteomes" id="UP000005640">
    <property type="component" value="Chromosome 5"/>
</dbReference>
<dbReference type="RNAct" id="Q16566">
    <property type="molecule type" value="protein"/>
</dbReference>
<dbReference type="Bgee" id="ENSG00000152495">
    <property type="expression patterns" value="Expressed in cerebellar vermis and 140 other cell types or tissues"/>
</dbReference>
<dbReference type="ExpressionAtlas" id="Q16566">
    <property type="expression patterns" value="baseline and differential"/>
</dbReference>
<dbReference type="GO" id="GO:0005737">
    <property type="term" value="C:cytoplasm"/>
    <property type="evidence" value="ECO:0000318"/>
    <property type="project" value="GO_Central"/>
</dbReference>
<dbReference type="GO" id="GO:0005783">
    <property type="term" value="C:endoplasmic reticulum"/>
    <property type="evidence" value="ECO:0000314"/>
    <property type="project" value="HPA"/>
</dbReference>
<dbReference type="GO" id="GO:0070062">
    <property type="term" value="C:extracellular exosome"/>
    <property type="evidence" value="ECO:0007005"/>
    <property type="project" value="UniProtKB"/>
</dbReference>
<dbReference type="GO" id="GO:0001650">
    <property type="term" value="C:fibrillar center"/>
    <property type="evidence" value="ECO:0000314"/>
    <property type="project" value="HPA"/>
</dbReference>
<dbReference type="GO" id="GO:0005654">
    <property type="term" value="C:nucleoplasm"/>
    <property type="evidence" value="ECO:0000314"/>
    <property type="project" value="HPA"/>
</dbReference>
<dbReference type="GO" id="GO:0005634">
    <property type="term" value="C:nucleus"/>
    <property type="evidence" value="ECO:0000318"/>
    <property type="project" value="GO_Central"/>
</dbReference>
<dbReference type="GO" id="GO:0005524">
    <property type="term" value="F:ATP binding"/>
    <property type="evidence" value="ECO:0007669"/>
    <property type="project" value="UniProtKB-KW"/>
</dbReference>
<dbReference type="GO" id="GO:0009931">
    <property type="term" value="F:calcium-dependent protein serine/threonine kinase activity"/>
    <property type="evidence" value="ECO:0000318"/>
    <property type="project" value="GO_Central"/>
</dbReference>
<dbReference type="GO" id="GO:0004683">
    <property type="term" value="F:calcium/calmodulin-dependent protein kinase activity"/>
    <property type="evidence" value="ECO:0000314"/>
    <property type="project" value="CACAO"/>
</dbReference>
<dbReference type="GO" id="GO:0005516">
    <property type="term" value="F:calmodulin binding"/>
    <property type="evidence" value="ECO:0000318"/>
    <property type="project" value="GO_Central"/>
</dbReference>
<dbReference type="GO" id="GO:0106310">
    <property type="term" value="F:protein serine kinase activity"/>
    <property type="evidence" value="ECO:0007669"/>
    <property type="project" value="RHEA"/>
</dbReference>
<dbReference type="GO" id="GO:0002250">
    <property type="term" value="P:adaptive immune response"/>
    <property type="evidence" value="ECO:0007669"/>
    <property type="project" value="UniProtKB-KW"/>
</dbReference>
<dbReference type="GO" id="GO:0006954">
    <property type="term" value="P:inflammatory response"/>
    <property type="evidence" value="ECO:0007669"/>
    <property type="project" value="UniProtKB-KW"/>
</dbReference>
<dbReference type="GO" id="GO:0035556">
    <property type="term" value="P:intracellular signal transduction"/>
    <property type="evidence" value="ECO:0000318"/>
    <property type="project" value="GO_Central"/>
</dbReference>
<dbReference type="GO" id="GO:0007616">
    <property type="term" value="P:long-term memory"/>
    <property type="evidence" value="ECO:0000316"/>
    <property type="project" value="UniProtKB"/>
</dbReference>
<dbReference type="GO" id="GO:0043011">
    <property type="term" value="P:myeloid dendritic cell differentiation"/>
    <property type="evidence" value="ECO:0000315"/>
    <property type="project" value="UniProtKB"/>
</dbReference>
<dbReference type="GO" id="GO:0045893">
    <property type="term" value="P:positive regulation of DNA-templated transcription"/>
    <property type="evidence" value="ECO:0000314"/>
    <property type="project" value="UniProtKB"/>
</dbReference>
<dbReference type="GO" id="GO:0006468">
    <property type="term" value="P:protein phosphorylation"/>
    <property type="evidence" value="ECO:0000304"/>
    <property type="project" value="ProtInc"/>
</dbReference>
<dbReference type="GO" id="GO:0045670">
    <property type="term" value="P:regulation of osteoclast differentiation"/>
    <property type="evidence" value="ECO:0000304"/>
    <property type="project" value="UniProtKB"/>
</dbReference>
<dbReference type="GO" id="GO:0033081">
    <property type="term" value="P:regulation of T cell differentiation in thymus"/>
    <property type="evidence" value="ECO:0000304"/>
    <property type="project" value="UniProtKB"/>
</dbReference>
<dbReference type="GO" id="GO:0007165">
    <property type="term" value="P:signal transduction"/>
    <property type="evidence" value="ECO:0000304"/>
    <property type="project" value="ProtInc"/>
</dbReference>
<dbReference type="CDD" id="cd14085">
    <property type="entry name" value="STKc_CaMKIV"/>
    <property type="match status" value="1"/>
</dbReference>
<dbReference type="FunFam" id="1.10.510.10:FF:000255">
    <property type="entry name" value="Calcium/calmodulin-dependent protein kinase type IV"/>
    <property type="match status" value="1"/>
</dbReference>
<dbReference type="FunFam" id="3.30.200.20:FF:000279">
    <property type="entry name" value="Calcium/calmodulin-dependent protein kinase type IV"/>
    <property type="match status" value="1"/>
</dbReference>
<dbReference type="Gene3D" id="3.30.200.20">
    <property type="entry name" value="Phosphorylase Kinase, domain 1"/>
    <property type="match status" value="1"/>
</dbReference>
<dbReference type="Gene3D" id="1.10.510.10">
    <property type="entry name" value="Transferase(Phosphotransferase) domain 1"/>
    <property type="match status" value="1"/>
</dbReference>
<dbReference type="InterPro" id="IPR011009">
    <property type="entry name" value="Kinase-like_dom_sf"/>
</dbReference>
<dbReference type="InterPro" id="IPR000719">
    <property type="entry name" value="Prot_kinase_dom"/>
</dbReference>
<dbReference type="InterPro" id="IPR017441">
    <property type="entry name" value="Protein_kinase_ATP_BS"/>
</dbReference>
<dbReference type="InterPro" id="IPR008271">
    <property type="entry name" value="Ser/Thr_kinase_AS"/>
</dbReference>
<dbReference type="PANTHER" id="PTHR24347">
    <property type="entry name" value="SERINE/THREONINE-PROTEIN KINASE"/>
    <property type="match status" value="1"/>
</dbReference>
<dbReference type="Pfam" id="PF00069">
    <property type="entry name" value="Pkinase"/>
    <property type="match status" value="1"/>
</dbReference>
<dbReference type="SMART" id="SM00220">
    <property type="entry name" value="S_TKc"/>
    <property type="match status" value="1"/>
</dbReference>
<dbReference type="SUPFAM" id="SSF56112">
    <property type="entry name" value="Protein kinase-like (PK-like)"/>
    <property type="match status" value="1"/>
</dbReference>
<dbReference type="PROSITE" id="PS00107">
    <property type="entry name" value="PROTEIN_KINASE_ATP"/>
    <property type="match status" value="1"/>
</dbReference>
<dbReference type="PROSITE" id="PS50011">
    <property type="entry name" value="PROTEIN_KINASE_DOM"/>
    <property type="match status" value="1"/>
</dbReference>
<dbReference type="PROSITE" id="PS00108">
    <property type="entry name" value="PROTEIN_KINASE_ST"/>
    <property type="match status" value="1"/>
</dbReference>
<name>KCC4_HUMAN</name>
<protein>
    <recommendedName>
        <fullName>Calcium/calmodulin-dependent protein kinase type IV</fullName>
        <shortName>CaMK IV</shortName>
        <ecNumber>2.7.11.17</ecNumber>
    </recommendedName>
    <alternativeName>
        <fullName>CaM kinase-GR</fullName>
    </alternativeName>
</protein>
<organism>
    <name type="scientific">Homo sapiens</name>
    <name type="common">Human</name>
    <dbReference type="NCBI Taxonomy" id="9606"/>
    <lineage>
        <taxon>Eukaryota</taxon>
        <taxon>Metazoa</taxon>
        <taxon>Chordata</taxon>
        <taxon>Craniata</taxon>
        <taxon>Vertebrata</taxon>
        <taxon>Euteleostomi</taxon>
        <taxon>Mammalia</taxon>
        <taxon>Eutheria</taxon>
        <taxon>Euarchontoglires</taxon>
        <taxon>Primates</taxon>
        <taxon>Haplorrhini</taxon>
        <taxon>Catarrhini</taxon>
        <taxon>Hominidae</taxon>
        <taxon>Homo</taxon>
    </lineage>
</organism>
<comment type="function">
    <text evidence="7 12 13 15 16 19 20 21">Calcium/calmodulin-dependent protein kinase that operates in the calcium-triggered CaMKK-CaMK4 signaling cascade and regulates, mainly by phosphorylation, the activity of several transcription activators, such as CREB1, MEF2D, JUN and RORA, which play pivotal roles in immune response, inflammation, and memory consolidation. In the thymus, regulates the CD4(+)/CD8(+) double positive thymocytes selection threshold during T-cell ontogeny. In CD4 memory T-cells, is required to link T-cell antigen receptor (TCR) signaling to the production of IL2, IFNG and IL4 (through the regulation of CREB and MEF2). Regulates the differentiation and survival phases of osteoclasts and dendritic cells (DCs). Mediates DCs survival by linking TLR4 and the regulation of temporal expression of BCL2. Phosphorylates the transcription activator CREB1 on 'Ser-133' in hippocampal neuron nuclei and contribute to memory consolidation and long term potentiation (LTP) in the hippocampus. Can activate the MAP kinases MAPK1/ERK2, MAPK8/JNK1 and MAPK14/p38 and stimulate transcription through the phosphorylation of ELK1 and ATF2. Can also phosphorylate in vitro CREBBP, PRM2, MEF2A and STMN1/OP18.</text>
</comment>
<comment type="catalytic activity">
    <reaction>
        <text>L-seryl-[protein] + ATP = O-phospho-L-seryl-[protein] + ADP + H(+)</text>
        <dbReference type="Rhea" id="RHEA:17989"/>
        <dbReference type="Rhea" id="RHEA-COMP:9863"/>
        <dbReference type="Rhea" id="RHEA-COMP:11604"/>
        <dbReference type="ChEBI" id="CHEBI:15378"/>
        <dbReference type="ChEBI" id="CHEBI:29999"/>
        <dbReference type="ChEBI" id="CHEBI:30616"/>
        <dbReference type="ChEBI" id="CHEBI:83421"/>
        <dbReference type="ChEBI" id="CHEBI:456216"/>
        <dbReference type="EC" id="2.7.11.17"/>
    </reaction>
</comment>
<comment type="catalytic activity">
    <reaction>
        <text>L-threonyl-[protein] + ATP = O-phospho-L-threonyl-[protein] + ADP + H(+)</text>
        <dbReference type="Rhea" id="RHEA:46608"/>
        <dbReference type="Rhea" id="RHEA-COMP:11060"/>
        <dbReference type="Rhea" id="RHEA-COMP:11605"/>
        <dbReference type="ChEBI" id="CHEBI:15378"/>
        <dbReference type="ChEBI" id="CHEBI:30013"/>
        <dbReference type="ChEBI" id="CHEBI:30616"/>
        <dbReference type="ChEBI" id="CHEBI:61977"/>
        <dbReference type="ChEBI" id="CHEBI:456216"/>
        <dbReference type="EC" id="2.7.11.17"/>
    </reaction>
</comment>
<comment type="activity regulation">
    <text evidence="9 10 18">Activated by Ca(2+)/calmodulin. Binding of calmodulin results in conformational change that relieves intrasteric autoinhibition and allows phosphorylation of Thr-200 within the activation loop by CaMKK1 or CaMKK2. Phosphorylation of Thr-200 results in a 10-20-fold increase in total activity to generate Ca(2+)/calmodulin-independent activity. Autophosphorylation of the N-terminus Ser-12 and Ser-13 is required for full activation. Inactivated by protein phosphatase 2A (PPP2CA/PPP2CB) which dephosphorylates Thr-200, thereby terminating autonomous activity and helping to maintain the enzyme in its autoinhibited state.</text>
</comment>
<comment type="subunit">
    <text evidence="1 9 22">Monomer (By similarity). Interacts with protein phosphatase 2A (PPP2CA/PPP2CB); the interaction is mutually exclusive with binding to Ca(2+)/calmodulin.</text>
</comment>
<comment type="subcellular location">
    <subcellularLocation>
        <location>Cytoplasm</location>
    </subcellularLocation>
    <subcellularLocation>
        <location>Nucleus</location>
    </subcellularLocation>
    <text evidence="1">Localized in hippocampal neuron nuclei. In spermatids, associated with chromatin and nuclear matrix (By similarity).</text>
</comment>
<comment type="tissue specificity">
    <text evidence="8 15 17">Expressed in brain, thymus, CD4 T-cells, testis and epithelial ovarian cancer tissue.</text>
</comment>
<comment type="developmental stage">
    <text evidence="12">Expressed during differentiation of monocyte-derived dendritic cells (at protein level).</text>
</comment>
<comment type="domain">
    <text evidence="15">The autoinhibitory domain overlaps with the calmodulin binding region and interacts in the inactive folded state with the catalytic domain as a pseudosubstrate.</text>
</comment>
<comment type="PTM">
    <text evidence="9 14 18">Phosphorylated by CaMKK1 and CaMKK2 on Thr-200. Dephosphorylated by protein phosphatase 2A. Autophosphorylated on Ser-12 and Ser-13.</text>
</comment>
<comment type="PTM">
    <text evidence="9 14 18">Glycosylation at Ser-189 modulates the phosphorylation of CaMK4 at Thr-200 and negatively regulates its activity toward CREB1 in basal conditions and during early inomycin stimulation.</text>
</comment>
<comment type="similarity">
    <text evidence="23">Belongs to the protein kinase superfamily. CAMK Ser/Thr protein kinase family. CaMK subfamily.</text>
</comment>
<comment type="sequence caution" evidence="23">
    <conflict type="erroneous initiation">
        <sequence resource="EMBL-CDS" id="AAH16695"/>
    </conflict>
    <text>Extended N-terminus.</text>
</comment>
<sequence>MLKVTVPSCSASSCSSVTASAAPGTASLVPDYWIDGSNRDALSDFFEVESELGRGATSIVYRCKQKGTQKPYALKVLKKTVDKKIVRTEIGVLLRLSHPNIIKLKEIFETPTEISLVLELVTGGELFDRIVEKGYYSERDAADAVKQILEAVAYLHENGIVHRDLKPENLLYATPAPDAPLKIADFGLSKIVEHQVLMKTVCGTPGYCAPEILRGCAYGPEVDMWSVGIITYILLCGFEPFYDERGDQFMFRRILNCEYYFISPWWDEVSLNAKDLVRKLIVLDPKKRLTTFQALQHPWVTGKAANFVHMDTAQKKLQEFNARRKLKAAVKAVVASSRLGSASSSHGSIQESHKASRDPSPIQDGNEDMKAIPEGEKIQGDGAQAAVKGAQAELMKVQALEKVKGADINAEEAPKMVPKAVEDGIKVADLELEEGLAEEKLKTVEEAAAPREGQGSSAVGFEVPQQDVILPEY</sequence>
<reference key="1">
    <citation type="journal article" date="1994" name="J. Biochem.">
        <title>cDNA cloning and expression of human calmodulin-dependent protein kinase IV.</title>
        <authorList>
            <person name="Kitani T."/>
            <person name="Okuno S."/>
            <person name="Fujisawa H."/>
        </authorList>
    </citation>
    <scope>NUCLEOTIDE SEQUENCE [MRNA]</scope>
</reference>
<reference key="2">
    <citation type="journal article" date="1994" name="Gene">
        <title>The cDNA sequence and characterization of the Ca2+/calmodulin-dependent protein kinase-Gr from human brain and thymus.</title>
        <authorList>
            <person name="Bland M.M."/>
            <person name="Monroe R.S."/>
            <person name="Ohmstede C.A."/>
        </authorList>
    </citation>
    <scope>NUCLEOTIDE SEQUENCE [MRNA]</scope>
    <source>
        <tissue>Cerebellum</tissue>
        <tissue>Thymus</tissue>
    </source>
</reference>
<reference key="3">
    <citation type="journal article" date="1994" name="J. Virol.">
        <title>A Ca2+/calmodulin-dependent protein kinase, CaM kinase-Gr, expressed after transformation of primary human B lymphocytes by Epstein-Barr virus (EBV) is induced by the EBV oncogene LMP1.</title>
        <authorList>
            <person name="Mosialos G."/>
            <person name="Hanissian S.H."/>
            <person name="Jawahar S."/>
            <person name="Vara L."/>
            <person name="Kieff E."/>
            <person name="Chatila T.A."/>
        </authorList>
    </citation>
    <scope>NUCLEOTIDE SEQUENCE [MRNA]</scope>
    <source>
        <tissue>Blood</tissue>
    </source>
</reference>
<reference key="4">
    <citation type="submission" date="2005-09" db="EMBL/GenBank/DDBJ databases">
        <authorList>
            <person name="Mural R.J."/>
            <person name="Istrail S."/>
            <person name="Sutton G.G."/>
            <person name="Florea L."/>
            <person name="Halpern A.L."/>
            <person name="Mobarry C.M."/>
            <person name="Lippert R."/>
            <person name="Walenz B."/>
            <person name="Shatkay H."/>
            <person name="Dew I."/>
            <person name="Miller J.R."/>
            <person name="Flanigan M.J."/>
            <person name="Edwards N.J."/>
            <person name="Bolanos R."/>
            <person name="Fasulo D."/>
            <person name="Halldorsson B.V."/>
            <person name="Hannenhalli S."/>
            <person name="Turner R."/>
            <person name="Yooseph S."/>
            <person name="Lu F."/>
            <person name="Nusskern D.R."/>
            <person name="Shue B.C."/>
            <person name="Zheng X.H."/>
            <person name="Zhong F."/>
            <person name="Delcher A.L."/>
            <person name="Huson D.H."/>
            <person name="Kravitz S.A."/>
            <person name="Mouchard L."/>
            <person name="Reinert K."/>
            <person name="Remington K.A."/>
            <person name="Clark A.G."/>
            <person name="Waterman M.S."/>
            <person name="Eichler E.E."/>
            <person name="Adams M.D."/>
            <person name="Hunkapiller M.W."/>
            <person name="Myers E.W."/>
            <person name="Venter J.C."/>
        </authorList>
    </citation>
    <scope>NUCLEOTIDE SEQUENCE [LARGE SCALE GENOMIC DNA]</scope>
</reference>
<reference key="5">
    <citation type="journal article" date="2004" name="Genome Res.">
        <title>The status, quality, and expansion of the NIH full-length cDNA project: the Mammalian Gene Collection (MGC).</title>
        <authorList>
            <consortium name="The MGC Project Team"/>
        </authorList>
    </citation>
    <scope>NUCLEOTIDE SEQUENCE [LARGE SCALE MRNA]</scope>
    <source>
        <tissue>Brain</tissue>
        <tissue>Lung</tissue>
    </source>
</reference>
<reference key="6">
    <citation type="journal article" date="1993" name="J. Biol. Chem.">
        <title>Expression of a Ca2+/calmodulin-dependent protein kinase, CaM kinase-Gr, in human T lymphocytes. Regulation of kinase activity by T cell receptor signaling.</title>
        <authorList>
            <person name="Hanissian S.H."/>
            <person name="Frangakis M."/>
            <person name="Bland M.M."/>
            <person name="Jawahar S."/>
            <person name="Chatila T.A."/>
        </authorList>
    </citation>
    <scope>TISSUE SPECIFICITY</scope>
</reference>
<reference key="7">
    <citation type="journal article" date="1994" name="J. Biol. Chem.">
        <title>Activation mechanisms for Ca2+/calmodulin-dependent protein kinase IV. Identification of a brain CaM-kinase IV kinase.</title>
        <authorList>
            <person name="Tokumitsu H."/>
            <person name="Brickey D.A."/>
            <person name="Glod J."/>
            <person name="Hidaka H."/>
            <person name="Sikela J."/>
            <person name="Soderling T.R."/>
        </authorList>
    </citation>
    <scope>FUNCTION</scope>
    <scope>TISSUE SPECIFICITY</scope>
    <scope>DOMAIN AUTOINHIBITORY</scope>
    <scope>MUTAGENESIS OF 309-HIS--THR-312 AND 320-PHE-ASN-321</scope>
</reference>
<reference key="8">
    <citation type="journal article" date="1994" name="Mol. Cell. Biol.">
        <title>Calcium/calmodulin-dependent protein kinase types II and IV differentially regulate CREB-dependent gene expression.</title>
        <authorList>
            <person name="Matthews R.P."/>
            <person name="Guthrie C.R."/>
            <person name="Wailes L.M."/>
            <person name="Zhao X."/>
            <person name="Means A.R."/>
            <person name="McKnight G.S."/>
        </authorList>
    </citation>
    <scope>FUNCTION IN PHOSPHORYLATION OF CREB1</scope>
    <scope>SUBCELLULAR LOCATION</scope>
</reference>
<reference key="9">
    <citation type="journal article" date="1996" name="Cell">
        <title>CREB phosphorylation and dephosphorylation: a Ca(2+)- and stimulus duration-dependent switch for hippocampal gene expression.</title>
        <authorList>
            <person name="Bito H."/>
            <person name="Deisseroth K."/>
            <person name="Tsien R.W."/>
        </authorList>
    </citation>
    <scope>FUNCTION</scope>
    <scope>SUBCELLULAR LOCATION</scope>
</reference>
<reference key="10">
    <citation type="journal article" date="1996" name="J. Biol. Chem.">
        <title>A unique phosphorylation-dependent mechanism for the activation of Ca2+/calmodulin-dependent protein kinase type IV/GR.</title>
        <authorList>
            <person name="Chatila T."/>
            <person name="Anderson K.A."/>
            <person name="Ho N."/>
            <person name="Means A.R."/>
        </authorList>
    </citation>
    <scope>ACTIVITY REGULATION</scope>
    <scope>PHOSPHORYLATION AT SER-12; SER-13 AND THR-200</scope>
    <scope>MUTAGENESIS OF SER-12 AND SER-13</scope>
</reference>
<reference key="11">
    <citation type="journal article" date="1996" name="Proc. Natl. Acad. Sci. U.S.A.">
        <title>Regulation of mitogen-activated protein kinases by a calcium/calmodulin-dependent protein kinase cascade.</title>
        <authorList>
            <person name="Enslen H."/>
            <person name="Tokumitsu H."/>
            <person name="Stork P.J."/>
            <person name="Davis R.J."/>
            <person name="Soderling T.R."/>
        </authorList>
    </citation>
    <scope>FUNCTION IN PHOSPHORYLATION OF ELK1; JUN AND ATF2</scope>
    <scope>MUTAGENESIS OF THR-200</scope>
</reference>
<reference key="12">
    <citation type="journal article" date="1997" name="Mol. Cell. Biol.">
        <title>Regulation of microtubule dynamics by Ca2+/calmodulin-dependent kinase IV/Gr-dependent phosphorylation of oncoprotein 18.</title>
        <authorList>
            <person name="Melander Gradin H."/>
            <person name="Marklund U."/>
            <person name="Larsson N."/>
            <person name="Chatila T.A."/>
            <person name="Gullberg M."/>
        </authorList>
    </citation>
    <scope>FUNCTION IN PHOSPHORYLATION OF STMN1</scope>
</reference>
<reference key="13">
    <citation type="journal article" date="2000" name="J. Biol. Chem.">
        <title>Ca(2+)-dependent gene expression mediated by MEF2 transcription factors.</title>
        <authorList>
            <person name="Blaeser F."/>
            <person name="Ho N."/>
            <person name="Prywes R."/>
            <person name="Chatila T.A."/>
        </authorList>
    </citation>
    <scope>FUNCTION IN PHOSPHORYLATION OF MEF2D</scope>
    <scope>MUTAGENESIS OF LYS-75</scope>
</reference>
<reference key="14">
    <citation type="journal article" date="2002" name="Cancer Lett.">
        <title>Ca(2+)/calmodulin-dependent protein kinase IV expression in epithelial ovarian cancer.</title>
        <authorList>
            <person name="Takai N."/>
            <person name="Miyazaki T."/>
            <person name="Nishida M."/>
            <person name="Nasu K."/>
            <person name="Miyakawa I."/>
        </authorList>
    </citation>
    <scope>TISSUE SPECIFICITY</scope>
</reference>
<reference key="15">
    <citation type="journal article" date="2004" name="J. Biol. Chem.">
        <title>Regulation and function of the calcium/calmodulin-dependent protein kinase IV/protein serine/threonine phosphatase 2A signaling complex.</title>
        <authorList>
            <person name="Anderson K.A."/>
            <person name="Noeldner P.K."/>
            <person name="Reece K."/>
            <person name="Wadzinski B.E."/>
            <person name="Means A.R."/>
        </authorList>
    </citation>
    <scope>ACTIVITY REGULATION</scope>
    <scope>INTERACTION WITH PROTEIN PHOSPHATASE 2A</scope>
    <scope>PHOSPHORYLATION AT THR-200</scope>
    <scope>MUTAGENESIS OF 320-PHE-ASN-321</scope>
</reference>
<reference key="16">
    <citation type="journal article" date="2005" name="J. Biol. Chem.">
        <title>The autonomous activity of calcium/calmodulin-dependent protein kinase IV is required for its role in transcription.</title>
        <authorList>
            <person name="Chow F.A."/>
            <person name="Anderson K.A."/>
            <person name="Noeldner P.K."/>
            <person name="Means A.R."/>
        </authorList>
    </citation>
    <scope>ACTIVITY REGULATION</scope>
    <scope>PROTEIN PHOSPHATASE 2A BINDING DOMAIN</scope>
</reference>
<reference key="17">
    <citation type="journal article" date="2008" name="Blood">
        <title>Calmodulin-dependent kinase IV links Toll-like receptor 4 signaling with survival pathway of activated dendritic cells.</title>
        <authorList>
            <person name="Illario M."/>
            <person name="Giardino-Torchia M.L."/>
            <person name="Sankar U."/>
            <person name="Ribar T.J."/>
            <person name="Galgani M."/>
            <person name="Vitiello L."/>
            <person name="Masci A.M."/>
            <person name="Bertani F.R."/>
            <person name="Ciaglia E."/>
            <person name="Astone D."/>
            <person name="Maulucci G."/>
            <person name="Cavallo A."/>
            <person name="Vitale M."/>
            <person name="Cimini V."/>
            <person name="Pastore L."/>
            <person name="Means A.R."/>
            <person name="Rossi G."/>
            <person name="Racioppi L."/>
        </authorList>
    </citation>
    <scope>FUNCTION IN DENDRITIC CELLS LIFESPAN REGULATION</scope>
    <scope>DEVELOPMENTAL STAGE</scope>
</reference>
<reference key="18">
    <citation type="journal article" date="2008" name="J. Neurosci.">
        <title>Upregulation of calcium/calmodulin-dependent protein kinase IV improves memory formation and rescues memory loss with aging.</title>
        <authorList>
            <person name="Fukushima H."/>
            <person name="Maeda R."/>
            <person name="Suzuki R."/>
            <person name="Suzuki A."/>
            <person name="Nomoto M."/>
            <person name="Toyoda H."/>
            <person name="Wu L.J."/>
            <person name="Xu H."/>
            <person name="Zhao M.G."/>
            <person name="Ueda K."/>
            <person name="Kitamoto A."/>
            <person name="Mamiya N."/>
            <person name="Yoshida T."/>
            <person name="Homma S."/>
            <person name="Masushige S."/>
            <person name="Zhuo M."/>
            <person name="Kida S."/>
        </authorList>
    </citation>
    <scope>FUNCTION</scope>
</reference>
<reference key="19">
    <citation type="journal article" date="2009" name="Anal. Chem.">
        <title>Lys-N and trypsin cover complementary parts of the phosphoproteome in a refined SCX-based approach.</title>
        <authorList>
            <person name="Gauci S."/>
            <person name="Helbig A.O."/>
            <person name="Slijper M."/>
            <person name="Krijgsveld J."/>
            <person name="Heck A.J."/>
            <person name="Mohammed S."/>
        </authorList>
    </citation>
    <scope>IDENTIFICATION BY MASS SPECTROMETRY [LARGE SCALE ANALYSIS]</scope>
</reference>
<reference key="20">
    <citation type="journal article" date="2009" name="J. Biol. Chem.">
        <title>Regulation of calcium/calmodulin-dependent kinase IV by O-GlcNAc modification.</title>
        <authorList>
            <person name="Dias W.B."/>
            <person name="Cheung W.D."/>
            <person name="Wang Z."/>
            <person name="Hart G.W."/>
        </authorList>
    </citation>
    <scope>GLYCOSYLATION AT THR-57 SER-58; SER-137; SER-189; SER-344; SER-345 AND SER-356</scope>
    <scope>PHOSPHORYLATION AT THR-200</scope>
    <scope>IDENTIFICATION BY MASS SPECTROMETRY</scope>
    <scope>MUTAGENESIS OF 57-THR-SER-58 AND SER-189</scope>
</reference>
<reference key="21">
    <citation type="journal article" date="1998" name="Biochim. Biophys. Acta">
        <title>Calmodulin-dependent protein kinase IV: regulation of function and expression.</title>
        <authorList>
            <person name="Krebs J."/>
        </authorList>
    </citation>
    <scope>REVIEW ON FUNCTION</scope>
    <scope>REVIEW ON ACTIVITY REGULATION</scope>
</reference>
<reference key="22">
    <citation type="journal article" date="2008" name="Neuron">
        <title>Calmodulin-kinases: modulators of neuronal development and plasticity.</title>
        <authorList>
            <person name="Wayman G.A."/>
            <person name="Lee Y.S."/>
            <person name="Tokumitsu H."/>
            <person name="Silva A.J."/>
            <person name="Silva A."/>
            <person name="Soderling T.R."/>
        </authorList>
    </citation>
    <scope>REVIEW ON FUNCTION IN NEURONAL PLASTICITY</scope>
</reference>
<reference key="23">
    <citation type="journal article" date="2008" name="Trends Immunol.">
        <title>Calcium/calmodulin-dependent kinase IV in immune and inflammatory responses: novel routes for an ancient traveller.</title>
        <authorList>
            <person name="Racioppi L."/>
            <person name="Means A.R."/>
        </authorList>
    </citation>
    <scope>REVIEW ON INVOLVEMENT IN IMMUNE AND INFLAMMATORY RESPONSE</scope>
</reference>
<reference key="24">
    <citation type="journal article" date="2009" name="Sci. Signal.">
        <title>Quantitative phosphoproteomic analysis of T cell receptor signaling reveals system-wide modulation of protein-protein interactions.</title>
        <authorList>
            <person name="Mayya V."/>
            <person name="Lundgren D.H."/>
            <person name="Hwang S.-I."/>
            <person name="Rezaul K."/>
            <person name="Wu L."/>
            <person name="Eng J.K."/>
            <person name="Rodionov V."/>
            <person name="Han D.K."/>
        </authorList>
    </citation>
    <scope>PHOSPHORYLATION [LARGE SCALE ANALYSIS] AT SER-360</scope>
    <scope>IDENTIFICATION BY MASS SPECTROMETRY [LARGE SCALE ANALYSIS]</scope>
    <source>
        <tissue>Leukemic T-cell</tissue>
    </source>
</reference>
<reference key="25">
    <citation type="journal article" date="2011" name="BMC Syst. Biol.">
        <title>Initial characterization of the human central proteome.</title>
        <authorList>
            <person name="Burkard T.R."/>
            <person name="Planyavsky M."/>
            <person name="Kaupe I."/>
            <person name="Breitwieser F.P."/>
            <person name="Buerckstuemmer T."/>
            <person name="Bennett K.L."/>
            <person name="Superti-Furga G."/>
            <person name="Colinge J."/>
        </authorList>
    </citation>
    <scope>IDENTIFICATION BY MASS SPECTROMETRY [LARGE SCALE ANALYSIS]</scope>
</reference>
<reference key="26">
    <citation type="journal article" date="2014" name="J. Proteomics">
        <title>An enzyme assisted RP-RPLC approach for in-depth analysis of human liver phosphoproteome.</title>
        <authorList>
            <person name="Bian Y."/>
            <person name="Song C."/>
            <person name="Cheng K."/>
            <person name="Dong M."/>
            <person name="Wang F."/>
            <person name="Huang J."/>
            <person name="Sun D."/>
            <person name="Wang L."/>
            <person name="Ye M."/>
            <person name="Zou H."/>
        </authorList>
    </citation>
    <scope>IDENTIFICATION BY MASS SPECTROMETRY [LARGE SCALE ANALYSIS]</scope>
    <source>
        <tissue>Liver</tissue>
    </source>
</reference>
<reference key="27">
    <citation type="submission" date="2008-11" db="PDB data bank">
        <title>Crystal structure of human CAMK4 in complex with 4-amino(sulfamoyl-phenylamino)-triazole-carbothioic acid (2,6-difluoro-phenyl)-amide).</title>
        <authorList>
            <person name="Muniz J.R.C."/>
            <person name="Rellos P."/>
            <person name="Gileadi O."/>
            <person name="Fedorov O."/>
            <person name="Filippakopoulos P."/>
            <person name="Salah E."/>
            <person name="Pike A."/>
            <person name="Phillips C."/>
            <person name="Niesen F."/>
            <person name="Shrestha L."/>
            <person name="Burgess-Brown N."/>
            <person name="Bullock A."/>
            <person name="Berridge G."/>
            <person name="Vondelft F."/>
            <person name="Edwards A.M."/>
            <person name="Bountra C."/>
            <person name="Arrowsmith C.H."/>
            <person name="Weigelt J."/>
            <person name="Knapp S."/>
        </authorList>
    </citation>
    <scope>X-RAY CRYSTALLOGRAPHY (2.17 ANGSTROMS) OF 15-340 IN COMPLEX WITH INHIBITOR</scope>
</reference>
<reference key="28">
    <citation type="journal article" date="2007" name="Nature">
        <title>Patterns of somatic mutation in human cancer genomes.</title>
        <authorList>
            <person name="Greenman C."/>
            <person name="Stephens P."/>
            <person name="Smith R."/>
            <person name="Dalgliesh G.L."/>
            <person name="Hunter C."/>
            <person name="Bignell G."/>
            <person name="Davies H."/>
            <person name="Teague J."/>
            <person name="Butler A."/>
            <person name="Stevens C."/>
            <person name="Edkins S."/>
            <person name="O'Meara S."/>
            <person name="Vastrik I."/>
            <person name="Schmidt E.E."/>
            <person name="Avis T."/>
            <person name="Barthorpe S."/>
            <person name="Bhamra G."/>
            <person name="Buck G."/>
            <person name="Choudhury B."/>
            <person name="Clements J."/>
            <person name="Cole J."/>
            <person name="Dicks E."/>
            <person name="Forbes S."/>
            <person name="Gray K."/>
            <person name="Halliday K."/>
            <person name="Harrison R."/>
            <person name="Hills K."/>
            <person name="Hinton J."/>
            <person name="Jenkinson A."/>
            <person name="Jones D."/>
            <person name="Menzies A."/>
            <person name="Mironenko T."/>
            <person name="Perry J."/>
            <person name="Raine K."/>
            <person name="Richardson D."/>
            <person name="Shepherd R."/>
            <person name="Small A."/>
            <person name="Tofts C."/>
            <person name="Varian J."/>
            <person name="Webb T."/>
            <person name="West S."/>
            <person name="Widaa S."/>
            <person name="Yates A."/>
            <person name="Cahill D.P."/>
            <person name="Louis D.N."/>
            <person name="Goldstraw P."/>
            <person name="Nicholson A.G."/>
            <person name="Brasseur F."/>
            <person name="Looijenga L."/>
            <person name="Weber B.L."/>
            <person name="Chiew Y.-E."/>
            <person name="DeFazio A."/>
            <person name="Greaves M.F."/>
            <person name="Green A.R."/>
            <person name="Campbell P."/>
            <person name="Birney E."/>
            <person name="Easton D.F."/>
            <person name="Chenevix-Trench G."/>
            <person name="Tan M.-H."/>
            <person name="Khoo S.K."/>
            <person name="Teh B.T."/>
            <person name="Yuen S.T."/>
            <person name="Leung S.Y."/>
            <person name="Wooster R."/>
            <person name="Futreal P.A."/>
            <person name="Stratton M.R."/>
        </authorList>
    </citation>
    <scope>VARIANTS [LARGE SCALE ANALYSIS] GLY-150; ASN-178; ARG-465 AND MET-469</scope>
</reference>
<proteinExistence type="evidence at protein level"/>
<accession>Q16566</accession>
<accession>D3DSZ7</accession>
<feature type="chain" id="PRO_0000086106" description="Calcium/calmodulin-dependent protein kinase type IV">
    <location>
        <begin position="1"/>
        <end position="473"/>
    </location>
</feature>
<feature type="domain" description="Protein kinase" evidence="4">
    <location>
        <begin position="46"/>
        <end position="300"/>
    </location>
</feature>
<feature type="region of interest" description="Autoinhibitory domain">
    <location>
        <begin position="305"/>
        <end position="321"/>
    </location>
</feature>
<feature type="region of interest" description="PP2A-binding">
    <location>
        <begin position="306"/>
        <end position="323"/>
    </location>
</feature>
<feature type="region of interest" description="Calmodulin-binding" evidence="3">
    <location>
        <begin position="322"/>
        <end position="341"/>
    </location>
</feature>
<feature type="region of interest" description="Disordered" evidence="6">
    <location>
        <begin position="341"/>
        <end position="368"/>
    </location>
</feature>
<feature type="region of interest" description="Disordered" evidence="6">
    <location>
        <begin position="445"/>
        <end position="473"/>
    </location>
</feature>
<feature type="compositionally biased region" description="Low complexity" evidence="6">
    <location>
        <begin position="341"/>
        <end position="350"/>
    </location>
</feature>
<feature type="active site" description="Proton acceptor" evidence="4 5">
    <location>
        <position position="164"/>
    </location>
</feature>
<feature type="binding site" evidence="4">
    <location>
        <begin position="52"/>
        <end position="60"/>
    </location>
    <ligand>
        <name>ATP</name>
        <dbReference type="ChEBI" id="CHEBI:30616"/>
    </ligand>
</feature>
<feature type="binding site" evidence="4">
    <location>
        <position position="75"/>
    </location>
    <ligand>
        <name>ATP</name>
        <dbReference type="ChEBI" id="CHEBI:30616"/>
    </ligand>
</feature>
<feature type="modified residue" description="Phosphoserine; by autocatalysis" evidence="18">
    <location>
        <position position="12"/>
    </location>
</feature>
<feature type="modified residue" description="Phosphoserine; by autocatalysis" evidence="18">
    <location>
        <position position="13"/>
    </location>
</feature>
<feature type="modified residue" description="Phosphothreonine; by CaMKK1 and CaMKK2" evidence="9 14 18">
    <location>
        <position position="200"/>
    </location>
</feature>
<feature type="modified residue" description="Phosphoserine; by autocatalysis" evidence="2">
    <location>
        <position position="336"/>
    </location>
</feature>
<feature type="modified residue" description="Phosphoserine" evidence="2">
    <location>
        <position position="341"/>
    </location>
</feature>
<feature type="modified residue" description="Phosphoserine" evidence="24">
    <location>
        <position position="360"/>
    </location>
</feature>
<feature type="glycosylation site" description="O-linked (GlcNAc) threonine" evidence="14">
    <location>
        <position position="57"/>
    </location>
</feature>
<feature type="glycosylation site" description="O-linked (GlcNAc) serine" evidence="14">
    <location>
        <position position="58"/>
    </location>
</feature>
<feature type="glycosylation site" description="O-linked (GlcNAc) serine" evidence="14">
    <location>
        <position position="137"/>
    </location>
</feature>
<feature type="glycosylation site" description="O-linked (GlcNAc) serine" evidence="14">
    <location>
        <position position="189"/>
    </location>
</feature>
<feature type="glycosylation site" description="O-linked (GlcNAc) serine" evidence="14">
    <location>
        <position position="344"/>
    </location>
</feature>
<feature type="glycosylation site" description="O-linked (GlcNAc) serine" evidence="14">
    <location>
        <position position="345"/>
    </location>
</feature>
<feature type="glycosylation site" description="O-linked (GlcNAc) serine" evidence="14">
    <location>
        <position position="356"/>
    </location>
</feature>
<feature type="sequence variant" id="VAR_040604" description="In a lung adenocarcinoma sample; somatic mutation." evidence="11">
    <original>E</original>
    <variation>G</variation>
    <location>
        <position position="150"/>
    </location>
</feature>
<feature type="sequence variant" id="VAR_040605" description="In dbSNP:rs35548075." evidence="11">
    <original>D</original>
    <variation>N</variation>
    <location>
        <position position="178"/>
    </location>
</feature>
<feature type="sequence variant" id="VAR_040606" description="In dbSNP:rs56360861." evidence="11">
    <original>Q</original>
    <variation>R</variation>
    <location>
        <position position="465"/>
    </location>
</feature>
<feature type="sequence variant" id="VAR_040607" description="In a lung large cell carcinoma sample; somatic mutation; dbSNP:rs1239950009." evidence="11">
    <original>I</original>
    <variation>M</variation>
    <location>
        <position position="469"/>
    </location>
</feature>
<feature type="mutagenesis site" description="Loss of activity." evidence="18">
    <original>S</original>
    <variation>A</variation>
    <location>
        <position position="12"/>
    </location>
</feature>
<feature type="mutagenesis site" description="Loss of activity." evidence="18">
    <original>S</original>
    <variation>A</variation>
    <location>
        <position position="13"/>
    </location>
</feature>
<feature type="mutagenesis site" description="Loss of phosphorylation of CREB1." evidence="14">
    <original>TS</original>
    <variation>AA</variation>
    <location>
        <begin position="57"/>
        <end position="58"/>
    </location>
</feature>
<feature type="mutagenesis site" description="Loss of activity; dominant negative form." evidence="7">
    <original>K</original>
    <variation>E</variation>
    <location>
        <position position="75"/>
    </location>
</feature>
<feature type="mutagenesis site" description="Increases phosphorylation of CREB1 2-fold. Decreases total O-linked glycosylation 2-fold. Increases ATP-binding affinity." evidence="14">
    <original>S</original>
    <variation>A</variation>
    <location>
        <position position="189"/>
    </location>
</feature>
<feature type="mutagenesis site" description="Loss of activation by CaMKK1 or CaMKK2." evidence="19">
    <original>T</original>
    <variation>A</variation>
    <location>
        <position position="200"/>
    </location>
</feature>
<feature type="mutagenesis site" description="Fully active Ca2+/CaM-independent kinase; when associated with 320-A-A-321." evidence="15">
    <original>HMDT</original>
    <variation>DEDD</variation>
    <location>
        <begin position="309"/>
        <end position="312"/>
    </location>
</feature>
<feature type="mutagenesis site" description="Fully active Ca2+/CaM-independent kinase; when associated with 309-A--A-312. Loss of interaction with PPP2CA/PPP2CB." evidence="9 15">
    <original>FN</original>
    <variation>DD</variation>
    <location>
        <begin position="320"/>
        <end position="321"/>
    </location>
</feature>
<feature type="strand" evidence="25">
    <location>
        <begin position="36"/>
        <end position="38"/>
    </location>
</feature>
<feature type="helix" evidence="25">
    <location>
        <begin position="42"/>
        <end position="44"/>
    </location>
</feature>
<feature type="strand" evidence="25">
    <location>
        <begin position="46"/>
        <end position="54"/>
    </location>
</feature>
<feature type="strand" evidence="25">
    <location>
        <begin position="56"/>
        <end position="65"/>
    </location>
</feature>
<feature type="turn" evidence="25">
    <location>
        <begin position="66"/>
        <end position="68"/>
    </location>
</feature>
<feature type="strand" evidence="25">
    <location>
        <begin position="71"/>
        <end position="78"/>
    </location>
</feature>
<feature type="helix" evidence="25">
    <location>
        <begin position="91"/>
        <end position="95"/>
    </location>
</feature>
<feature type="strand" evidence="25">
    <location>
        <begin position="104"/>
        <end position="109"/>
    </location>
</feature>
<feature type="strand" evidence="25">
    <location>
        <begin position="111"/>
        <end position="118"/>
    </location>
</feature>
<feature type="helix" evidence="25">
    <location>
        <begin position="126"/>
        <end position="130"/>
    </location>
</feature>
<feature type="helix" evidence="25">
    <location>
        <begin position="138"/>
        <end position="157"/>
    </location>
</feature>
<feature type="helix" evidence="25">
    <location>
        <begin position="167"/>
        <end position="169"/>
    </location>
</feature>
<feature type="strand" evidence="25">
    <location>
        <begin position="170"/>
        <end position="176"/>
    </location>
</feature>
<feature type="strand" evidence="25">
    <location>
        <begin position="181"/>
        <end position="183"/>
    </location>
</feature>
<feature type="helix" evidence="25">
    <location>
        <begin position="205"/>
        <end position="207"/>
    </location>
</feature>
<feature type="helix" evidence="25">
    <location>
        <begin position="210"/>
        <end position="213"/>
    </location>
</feature>
<feature type="helix" evidence="25">
    <location>
        <begin position="221"/>
        <end position="236"/>
    </location>
</feature>
<feature type="helix" evidence="25">
    <location>
        <begin position="247"/>
        <end position="255"/>
    </location>
</feature>
<feature type="turn" evidence="25">
    <location>
        <begin position="263"/>
        <end position="268"/>
    </location>
</feature>
<feature type="helix" evidence="25">
    <location>
        <begin position="271"/>
        <end position="278"/>
    </location>
</feature>
<feature type="helix" evidence="25">
    <location>
        <begin position="285"/>
        <end position="287"/>
    </location>
</feature>
<feature type="helix" evidence="25">
    <location>
        <begin position="291"/>
        <end position="296"/>
    </location>
</feature>
<feature type="turn" evidence="25">
    <location>
        <begin position="298"/>
        <end position="301"/>
    </location>
</feature>
<feature type="helix" evidence="25">
    <location>
        <begin position="311"/>
        <end position="335"/>
    </location>
</feature>
<evidence type="ECO:0000250" key="1"/>
<evidence type="ECO:0000250" key="2">
    <source>
        <dbReference type="UniProtKB" id="P13234"/>
    </source>
</evidence>
<evidence type="ECO:0000255" key="3"/>
<evidence type="ECO:0000255" key="4">
    <source>
        <dbReference type="PROSITE-ProRule" id="PRU00159"/>
    </source>
</evidence>
<evidence type="ECO:0000255" key="5">
    <source>
        <dbReference type="PROSITE-ProRule" id="PRU10027"/>
    </source>
</evidence>
<evidence type="ECO:0000256" key="6">
    <source>
        <dbReference type="SAM" id="MobiDB-lite"/>
    </source>
</evidence>
<evidence type="ECO:0000269" key="7">
    <source>
    </source>
</evidence>
<evidence type="ECO:0000269" key="8">
    <source>
    </source>
</evidence>
<evidence type="ECO:0000269" key="9">
    <source>
    </source>
</evidence>
<evidence type="ECO:0000269" key="10">
    <source>
    </source>
</evidence>
<evidence type="ECO:0000269" key="11">
    <source>
    </source>
</evidence>
<evidence type="ECO:0000269" key="12">
    <source>
    </source>
</evidence>
<evidence type="ECO:0000269" key="13">
    <source>
    </source>
</evidence>
<evidence type="ECO:0000269" key="14">
    <source>
    </source>
</evidence>
<evidence type="ECO:0000269" key="15">
    <source>
    </source>
</evidence>
<evidence type="ECO:0000269" key="16">
    <source>
    </source>
</evidence>
<evidence type="ECO:0000269" key="17">
    <source>
    </source>
</evidence>
<evidence type="ECO:0000269" key="18">
    <source>
    </source>
</evidence>
<evidence type="ECO:0000269" key="19">
    <source>
    </source>
</evidence>
<evidence type="ECO:0000269" key="20">
    <source>
    </source>
</evidence>
<evidence type="ECO:0000269" key="21">
    <source>
    </source>
</evidence>
<evidence type="ECO:0000269" key="22">
    <source ref="27"/>
</evidence>
<evidence type="ECO:0000305" key="23"/>
<evidence type="ECO:0007744" key="24">
    <source>
    </source>
</evidence>
<evidence type="ECO:0007829" key="25">
    <source>
        <dbReference type="PDB" id="2W4O"/>
    </source>
</evidence>